<gene>
    <name type="primary">creb3l2</name>
</gene>
<protein>
    <recommendedName>
        <fullName>Cyclic AMP-responsive element-binding protein 3-like protein 2</fullName>
        <shortName>cAMP-responsive element-binding protein 3-like protein 2</shortName>
    </recommendedName>
    <component>
        <recommendedName>
            <fullName>Processed cyclic AMP-responsive element-binding protein 3-like protein 2</fullName>
        </recommendedName>
    </component>
</protein>
<organism>
    <name type="scientific">Xenopus laevis</name>
    <name type="common">African clawed frog</name>
    <dbReference type="NCBI Taxonomy" id="8355"/>
    <lineage>
        <taxon>Eukaryota</taxon>
        <taxon>Metazoa</taxon>
        <taxon>Chordata</taxon>
        <taxon>Craniata</taxon>
        <taxon>Vertebrata</taxon>
        <taxon>Euteleostomi</taxon>
        <taxon>Amphibia</taxon>
        <taxon>Batrachia</taxon>
        <taxon>Anura</taxon>
        <taxon>Pipoidea</taxon>
        <taxon>Pipidae</taxon>
        <taxon>Xenopodinae</taxon>
        <taxon>Xenopus</taxon>
        <taxon>Xenopus</taxon>
    </lineage>
</organism>
<name>CR3L2_XENLA</name>
<proteinExistence type="evidence at transcript level"/>
<reference key="1">
    <citation type="submission" date="2006-12" db="EMBL/GenBank/DDBJ databases">
        <authorList>
            <consortium name="NIH - Xenopus Gene Collection (XGC) project"/>
        </authorList>
    </citation>
    <scope>NUCLEOTIDE SEQUENCE [LARGE SCALE MRNA]</scope>
    <source>
        <tissue>Embryo</tissue>
    </source>
</reference>
<evidence type="ECO:0000250" key="1"/>
<evidence type="ECO:0000250" key="2">
    <source>
        <dbReference type="UniProtKB" id="Q70SY1"/>
    </source>
</evidence>
<evidence type="ECO:0000250" key="3">
    <source>
        <dbReference type="UniProtKB" id="Q8BH52"/>
    </source>
</evidence>
<evidence type="ECO:0000255" key="4"/>
<evidence type="ECO:0000255" key="5">
    <source>
        <dbReference type="PROSITE-ProRule" id="PRU00978"/>
    </source>
</evidence>
<evidence type="ECO:0000256" key="6">
    <source>
        <dbReference type="SAM" id="MobiDB-lite"/>
    </source>
</evidence>
<evidence type="ECO:0000305" key="7"/>
<accession>A2VD01</accession>
<feature type="chain" id="PRO_0000288072" description="Cyclic AMP-responsive element-binding protein 3-like protein 2">
    <location>
        <begin position="1"/>
        <end position="525"/>
    </location>
</feature>
<feature type="chain" id="PRO_0000296214" description="Processed cyclic AMP-responsive element-binding protein 3-like protein 2">
    <location>
        <begin position="1"/>
        <end status="unknown"/>
    </location>
</feature>
<feature type="topological domain" description="Cytoplasmic" evidence="4">
    <location>
        <begin position="1"/>
        <end position="382"/>
    </location>
</feature>
<feature type="transmembrane region" description="Helical; Signal-anchor for type II membrane protein" evidence="4">
    <location>
        <begin position="383"/>
        <end position="403"/>
    </location>
</feature>
<feature type="topological domain" description="Lumenal" evidence="4">
    <location>
        <begin position="404"/>
        <end position="525"/>
    </location>
</feature>
<feature type="domain" description="bZIP" evidence="5">
    <location>
        <begin position="299"/>
        <end position="362"/>
    </location>
</feature>
<feature type="region of interest" description="Disordered" evidence="6">
    <location>
        <begin position="85"/>
        <end position="104"/>
    </location>
</feature>
<feature type="region of interest" description="Disordered" evidence="6">
    <location>
        <begin position="203"/>
        <end position="267"/>
    </location>
</feature>
<feature type="region of interest" description="Basic motif" evidence="5">
    <location>
        <begin position="301"/>
        <end position="330"/>
    </location>
</feature>
<feature type="region of interest" description="Disordered" evidence="6">
    <location>
        <begin position="309"/>
        <end position="338"/>
    </location>
</feature>
<feature type="region of interest" description="Leucine-zipper" evidence="5">
    <location>
        <begin position="341"/>
        <end position="362"/>
    </location>
</feature>
<feature type="short sequence motif" description="S1P recognition" evidence="2">
    <location>
        <begin position="433"/>
        <end position="436"/>
    </location>
</feature>
<feature type="compositionally biased region" description="Polar residues" evidence="6">
    <location>
        <begin position="90"/>
        <end position="102"/>
    </location>
</feature>
<feature type="compositionally biased region" description="Polar residues" evidence="6">
    <location>
        <begin position="213"/>
        <end position="239"/>
    </location>
</feature>
<feature type="compositionally biased region" description="Basic and acidic residues" evidence="6">
    <location>
        <begin position="322"/>
        <end position="332"/>
    </location>
</feature>
<feature type="glycosylation site" description="N-linked (GlcNAc...) asparagine" evidence="4">
    <location>
        <position position="490"/>
    </location>
</feature>
<feature type="glycosylation site" description="N-linked (GlcNAc...) asparagine" evidence="4">
    <location>
        <position position="509"/>
    </location>
</feature>
<feature type="glycosylation site" description="N-linked (GlcNAc...) asparagine" evidence="4">
    <location>
        <position position="522"/>
    </location>
</feature>
<keyword id="KW-0010">Activator</keyword>
<keyword id="KW-0217">Developmental protein</keyword>
<keyword id="KW-0238">DNA-binding</keyword>
<keyword id="KW-0256">Endoplasmic reticulum</keyword>
<keyword id="KW-0325">Glycoprotein</keyword>
<keyword id="KW-0472">Membrane</keyword>
<keyword id="KW-0539">Nucleus</keyword>
<keyword id="KW-1185">Reference proteome</keyword>
<keyword id="KW-0735">Signal-anchor</keyword>
<keyword id="KW-0804">Transcription</keyword>
<keyword id="KW-0805">Transcription regulation</keyword>
<keyword id="KW-0812">Transmembrane</keyword>
<keyword id="KW-1133">Transmembrane helix</keyword>
<keyword id="KW-0834">Unfolded protein response</keyword>
<comment type="function">
    <text evidence="3">Transcription factor involved in unfolded protein response (UPR). In the absence of endoplasmic reticulum (ER) stress, inserted into ER membranes, with N-terminal DNA-binding and transcription activation domains oriented toward the cytosolic face of the membrane. In response to ER stress, transported to the Golgi, where it is cleaved in a site-specific manner by resident proteases S1P/mbtps1 and S2P/mbtps2. The released N-terminal cytosolic domain is translocated to the nucleus to effect transcription of specific target genes. Plays a critical role in chondrogenesis. May protect neuroblastoma cells from ER stress-induced death. In vitro activates transcription of target genes via direct binding to the CRE site.</text>
</comment>
<comment type="subunit">
    <text evidence="1">Binds DNA as a dimer.</text>
</comment>
<comment type="subcellular location">
    <subcellularLocation>
        <location evidence="3">Endoplasmic reticulum membrane</location>
        <topology evidence="3">Single-pass type II membrane protein</topology>
    </subcellularLocation>
    <text evidence="3">ER membrane resident protein. Upon ER stress, translocated to the Golgi apparatus where it is cleaved. The cytosolic N-terminal fragment (processed cyclic AMP-responsive element-binding protein 3-like protein 1) is transported into the nucleus.</text>
</comment>
<comment type="subcellular location">
    <molecule>Processed cyclic AMP-responsive element-binding protein 3-like protein 2</molecule>
    <subcellularLocation>
        <location evidence="3">Nucleus</location>
    </subcellularLocation>
    <text evidence="3">Upon ER stress, translocated into the nucleus.</text>
</comment>
<comment type="PTM">
    <text evidence="3">Upon ER stress, translocated to the Golgi apparatus, where it is processed by regulated intramembrane proteolysis (RIP) to release the cytosol-facing N-terminal transcription factor domain. The cleavage is performed sequentially by site-1 and site-2 proteases (S1P/mbtps1 and S2P/mbtps2).</text>
</comment>
<comment type="similarity">
    <text evidence="7">Belongs to the bZIP family. ATF subfamily.</text>
</comment>
<dbReference type="EMBL" id="BC129061">
    <property type="protein sequence ID" value="AAI29062.1"/>
    <property type="molecule type" value="mRNA"/>
</dbReference>
<dbReference type="RefSeq" id="NP_001091333.1">
    <property type="nucleotide sequence ID" value="NM_001097864.1"/>
</dbReference>
<dbReference type="SMR" id="A2VD01"/>
<dbReference type="GlyCosmos" id="A2VD01">
    <property type="glycosylation" value="3 sites, No reported glycans"/>
</dbReference>
<dbReference type="DNASU" id="100037168"/>
<dbReference type="GeneID" id="100037168"/>
<dbReference type="KEGG" id="xla:100037168"/>
<dbReference type="AGR" id="Xenbase:XB-GENE-996214"/>
<dbReference type="CTD" id="100037168"/>
<dbReference type="Xenbase" id="XB-GENE-996214">
    <property type="gene designation" value="creb3l2.L"/>
</dbReference>
<dbReference type="OrthoDB" id="674948at2759"/>
<dbReference type="Proteomes" id="UP000186698">
    <property type="component" value="Chromosome 3L"/>
</dbReference>
<dbReference type="Bgee" id="100037168">
    <property type="expression patterns" value="Expressed in internal ear and 19 other cell types or tissues"/>
</dbReference>
<dbReference type="GO" id="GO:0005783">
    <property type="term" value="C:endoplasmic reticulum"/>
    <property type="evidence" value="ECO:0000250"/>
    <property type="project" value="UniProtKB"/>
</dbReference>
<dbReference type="GO" id="GO:0005789">
    <property type="term" value="C:endoplasmic reticulum membrane"/>
    <property type="evidence" value="ECO:0007669"/>
    <property type="project" value="UniProtKB-SubCell"/>
</dbReference>
<dbReference type="GO" id="GO:0005634">
    <property type="term" value="C:nucleus"/>
    <property type="evidence" value="ECO:0007669"/>
    <property type="project" value="UniProtKB-SubCell"/>
</dbReference>
<dbReference type="GO" id="GO:0035497">
    <property type="term" value="F:cAMP response element binding"/>
    <property type="evidence" value="ECO:0000318"/>
    <property type="project" value="GO_Central"/>
</dbReference>
<dbReference type="GO" id="GO:0000981">
    <property type="term" value="F:DNA-binding transcription factor activity, RNA polymerase II-specific"/>
    <property type="evidence" value="ECO:0000318"/>
    <property type="project" value="GO_Central"/>
</dbReference>
<dbReference type="GO" id="GO:0000976">
    <property type="term" value="F:transcription cis-regulatory region binding"/>
    <property type="evidence" value="ECO:0000250"/>
    <property type="project" value="UniProtKB"/>
</dbReference>
<dbReference type="GO" id="GO:0051216">
    <property type="term" value="P:cartilage development"/>
    <property type="evidence" value="ECO:0000250"/>
    <property type="project" value="UniProtKB"/>
</dbReference>
<dbReference type="GO" id="GO:0002062">
    <property type="term" value="P:chondrocyte differentiation"/>
    <property type="evidence" value="ECO:0000250"/>
    <property type="project" value="UniProtKB"/>
</dbReference>
<dbReference type="GO" id="GO:0006357">
    <property type="term" value="P:regulation of transcription by RNA polymerase II"/>
    <property type="evidence" value="ECO:0000318"/>
    <property type="project" value="GO_Central"/>
</dbReference>
<dbReference type="GO" id="GO:0034976">
    <property type="term" value="P:response to endoplasmic reticulum stress"/>
    <property type="evidence" value="ECO:0000250"/>
    <property type="project" value="UniProtKB"/>
</dbReference>
<dbReference type="GO" id="GO:0006986">
    <property type="term" value="P:response to unfolded protein"/>
    <property type="evidence" value="ECO:0007669"/>
    <property type="project" value="UniProtKB-KW"/>
</dbReference>
<dbReference type="CDD" id="cd14689">
    <property type="entry name" value="bZIP_CREB3"/>
    <property type="match status" value="1"/>
</dbReference>
<dbReference type="FunFam" id="1.20.5.170:FF:000054">
    <property type="entry name" value="Cyclic AMP-responsive element-binding protein 3-like 2"/>
    <property type="match status" value="1"/>
</dbReference>
<dbReference type="Gene3D" id="1.20.5.170">
    <property type="match status" value="1"/>
</dbReference>
<dbReference type="InterPro" id="IPR004827">
    <property type="entry name" value="bZIP"/>
</dbReference>
<dbReference type="InterPro" id="IPR046347">
    <property type="entry name" value="bZIP_sf"/>
</dbReference>
<dbReference type="PANTHER" id="PTHR46004">
    <property type="entry name" value="CYCLIC AMP RESPONSE ELEMENT-BINDING PROTEIN A"/>
    <property type="match status" value="1"/>
</dbReference>
<dbReference type="PANTHER" id="PTHR46004:SF2">
    <property type="entry name" value="CYCLIC AMP-RESPONSIVE ELEMENT-BINDING PROTEIN 3-LIKE PROTEIN 2"/>
    <property type="match status" value="1"/>
</dbReference>
<dbReference type="Pfam" id="PF00170">
    <property type="entry name" value="bZIP_1"/>
    <property type="match status" value="1"/>
</dbReference>
<dbReference type="SMART" id="SM00338">
    <property type="entry name" value="BRLZ"/>
    <property type="match status" value="1"/>
</dbReference>
<dbReference type="SUPFAM" id="SSF57959">
    <property type="entry name" value="Leucine zipper domain"/>
    <property type="match status" value="1"/>
</dbReference>
<dbReference type="PROSITE" id="PS50217">
    <property type="entry name" value="BZIP"/>
    <property type="match status" value="1"/>
</dbReference>
<dbReference type="PROSITE" id="PS00036">
    <property type="entry name" value="BZIP_BASIC"/>
    <property type="match status" value="1"/>
</dbReference>
<sequence>MEIMESGDPVIQWDRKLSELSEAAESDSLYNNTPFSELLDDSALLDVLGQLMGDPFLTEKYEMMEVEMNPSSPSPMIKAEHSYSLCGDSRPQSPFTHASSDDNFSDTDLTGDDWCLNGELTATTPTTKIKVEIPLEETPGLTPSVTLATSAVSASPEVGVSSQLPVPEQVKLLSPVALPQIKLEPHEVDQFLNLCPKEVAPTEALQMPPTPPSSHGSDSEGGQSPTRSLPPSSPVQSQAGGKMAARSPSALSNSPLLTAPHKLQGSGPLMLTEEEKRTLVAEGYPIPTKLPLTKAEEKALKKIRRKIKNKISAQESRRKKKEYMDSLEKRVENSSSENSELRKKVEVLESTNRTLLQQLQRLQAMVTGKVTRSCKAAGTQTGTCLMMVVLCFAVIFGSFTQNLDMYSSSSKTIHEPSQYSAPESYAASIVRSRKLLIFEEHQAVEELHSSAVMLETQDTWEVQADTISKQQAALLEELHLSQEKPFSLSNDSSSDMPVRHRFTSEFGHNDTTKVIELDRTVNTTS</sequence>